<keyword id="KW-0067">ATP-binding</keyword>
<keyword id="KW-0418">Kinase</keyword>
<keyword id="KW-0460">Magnesium</keyword>
<keyword id="KW-0479">Metal-binding</keyword>
<keyword id="KW-0547">Nucleotide-binding</keyword>
<keyword id="KW-0711">Selenium</keyword>
<keyword id="KW-0808">Transferase</keyword>
<evidence type="ECO:0000255" key="1">
    <source>
        <dbReference type="HAMAP-Rule" id="MF_00625"/>
    </source>
</evidence>
<protein>
    <recommendedName>
        <fullName evidence="1">Selenide, water dikinase</fullName>
        <ecNumber evidence="1">2.7.9.3</ecNumber>
    </recommendedName>
    <alternativeName>
        <fullName evidence="1">Selenium donor protein</fullName>
    </alternativeName>
    <alternativeName>
        <fullName evidence="1">Selenophosphate synthase</fullName>
    </alternativeName>
</protein>
<reference key="1">
    <citation type="journal article" date="2005" name="Proc. Natl. Acad. Sci. U.S.A.">
        <title>The psychrophilic lifestyle as revealed by the genome sequence of Colwellia psychrerythraea 34H through genomic and proteomic analyses.</title>
        <authorList>
            <person name="Methe B.A."/>
            <person name="Nelson K.E."/>
            <person name="Deming J.W."/>
            <person name="Momen B."/>
            <person name="Melamud E."/>
            <person name="Zhang X."/>
            <person name="Moult J."/>
            <person name="Madupu R."/>
            <person name="Nelson W.C."/>
            <person name="Dodson R.J."/>
            <person name="Brinkac L.M."/>
            <person name="Daugherty S.C."/>
            <person name="Durkin A.S."/>
            <person name="DeBoy R.T."/>
            <person name="Kolonay J.F."/>
            <person name="Sullivan S.A."/>
            <person name="Zhou L."/>
            <person name="Davidsen T.M."/>
            <person name="Wu M."/>
            <person name="Huston A.L."/>
            <person name="Lewis M."/>
            <person name="Weaver B."/>
            <person name="Weidman J.F."/>
            <person name="Khouri H."/>
            <person name="Utterback T.R."/>
            <person name="Feldblyum T.V."/>
            <person name="Fraser C.M."/>
        </authorList>
    </citation>
    <scope>NUCLEOTIDE SEQUENCE [LARGE SCALE GENOMIC DNA]</scope>
    <source>
        <strain>34H / ATCC BAA-681</strain>
    </source>
</reference>
<gene>
    <name evidence="1" type="primary">selD</name>
    <name type="ordered locus">CPS_0768</name>
</gene>
<proteinExistence type="inferred from homology"/>
<accession>Q488J7</accession>
<name>SELD_COLP3</name>
<organism>
    <name type="scientific">Colwellia psychrerythraea (strain 34H / ATCC BAA-681)</name>
    <name type="common">Vibrio psychroerythus</name>
    <dbReference type="NCBI Taxonomy" id="167879"/>
    <lineage>
        <taxon>Bacteria</taxon>
        <taxon>Pseudomonadati</taxon>
        <taxon>Pseudomonadota</taxon>
        <taxon>Gammaproteobacteria</taxon>
        <taxon>Alteromonadales</taxon>
        <taxon>Colwelliaceae</taxon>
        <taxon>Colwellia</taxon>
    </lineage>
</organism>
<feature type="chain" id="PRO_0000318665" description="Selenide, water dikinase">
    <location>
        <begin position="1"/>
        <end position="344"/>
    </location>
</feature>
<feature type="active site" evidence="1">
    <location>
        <position position="15"/>
    </location>
</feature>
<feature type="binding site" description="in other chain" evidence="1">
    <location>
        <position position="18"/>
    </location>
    <ligand>
        <name>ATP</name>
        <dbReference type="ChEBI" id="CHEBI:30616"/>
        <note>ligand shared between dimeric partners</note>
    </ligand>
</feature>
<feature type="binding site" description="in other chain" evidence="1">
    <location>
        <begin position="46"/>
        <end position="48"/>
    </location>
    <ligand>
        <name>ATP</name>
        <dbReference type="ChEBI" id="CHEBI:30616"/>
        <note>ligand shared between dimeric partners</note>
    </ligand>
</feature>
<feature type="binding site" evidence="1">
    <location>
        <position position="49"/>
    </location>
    <ligand>
        <name>Mg(2+)</name>
        <dbReference type="ChEBI" id="CHEBI:18420"/>
    </ligand>
</feature>
<feature type="binding site" description="in other chain" evidence="1">
    <location>
        <position position="66"/>
    </location>
    <ligand>
        <name>ATP</name>
        <dbReference type="ChEBI" id="CHEBI:30616"/>
        <note>ligand shared between dimeric partners</note>
    </ligand>
</feature>
<feature type="binding site" description="in other chain" evidence="1">
    <location>
        <position position="89"/>
    </location>
    <ligand>
        <name>ATP</name>
        <dbReference type="ChEBI" id="CHEBI:30616"/>
        <note>ligand shared between dimeric partners</note>
    </ligand>
</feature>
<feature type="binding site" evidence="1">
    <location>
        <position position="89"/>
    </location>
    <ligand>
        <name>Mg(2+)</name>
        <dbReference type="ChEBI" id="CHEBI:18420"/>
    </ligand>
</feature>
<feature type="binding site" evidence="1">
    <location>
        <begin position="137"/>
        <end position="139"/>
    </location>
    <ligand>
        <name>ATP</name>
        <dbReference type="ChEBI" id="CHEBI:30616"/>
        <note>ligand shared between dimeric partners</note>
    </ligand>
</feature>
<feature type="binding site" evidence="1">
    <location>
        <position position="225"/>
    </location>
    <ligand>
        <name>Mg(2+)</name>
        <dbReference type="ChEBI" id="CHEBI:18420"/>
    </ligand>
</feature>
<feature type="site" description="Important for catalytic activity" evidence="1">
    <location>
        <position position="18"/>
    </location>
</feature>
<comment type="function">
    <text evidence="1">Synthesizes selenophosphate from selenide and ATP.</text>
</comment>
<comment type="catalytic activity">
    <reaction evidence="1">
        <text>hydrogenselenide + ATP + H2O = selenophosphate + AMP + phosphate + 2 H(+)</text>
        <dbReference type="Rhea" id="RHEA:18737"/>
        <dbReference type="ChEBI" id="CHEBI:15377"/>
        <dbReference type="ChEBI" id="CHEBI:15378"/>
        <dbReference type="ChEBI" id="CHEBI:16144"/>
        <dbReference type="ChEBI" id="CHEBI:29317"/>
        <dbReference type="ChEBI" id="CHEBI:30616"/>
        <dbReference type="ChEBI" id="CHEBI:43474"/>
        <dbReference type="ChEBI" id="CHEBI:456215"/>
        <dbReference type="EC" id="2.7.9.3"/>
    </reaction>
</comment>
<comment type="cofactor">
    <cofactor evidence="1">
        <name>Mg(2+)</name>
        <dbReference type="ChEBI" id="CHEBI:18420"/>
    </cofactor>
    <text evidence="1">Binds 1 Mg(2+) ion per monomer.</text>
</comment>
<comment type="subunit">
    <text evidence="1">Homodimer.</text>
</comment>
<comment type="similarity">
    <text evidence="1">Belongs to the selenophosphate synthase 1 family. Class I subfamily.</text>
</comment>
<dbReference type="EC" id="2.7.9.3" evidence="1"/>
<dbReference type="EMBL" id="CP000083">
    <property type="protein sequence ID" value="AAZ25295.1"/>
    <property type="molecule type" value="Genomic_DNA"/>
</dbReference>
<dbReference type="RefSeq" id="WP_011041617.1">
    <property type="nucleotide sequence ID" value="NC_003910.7"/>
</dbReference>
<dbReference type="SMR" id="Q488J7"/>
<dbReference type="STRING" id="167879.CPS_0768"/>
<dbReference type="KEGG" id="cps:CPS_0768"/>
<dbReference type="HOGENOM" id="CLU_032859_0_1_6"/>
<dbReference type="Proteomes" id="UP000000547">
    <property type="component" value="Chromosome"/>
</dbReference>
<dbReference type="GO" id="GO:0005737">
    <property type="term" value="C:cytoplasm"/>
    <property type="evidence" value="ECO:0007669"/>
    <property type="project" value="TreeGrafter"/>
</dbReference>
<dbReference type="GO" id="GO:0005524">
    <property type="term" value="F:ATP binding"/>
    <property type="evidence" value="ECO:0007669"/>
    <property type="project" value="UniProtKB-UniRule"/>
</dbReference>
<dbReference type="GO" id="GO:0000287">
    <property type="term" value="F:magnesium ion binding"/>
    <property type="evidence" value="ECO:0007669"/>
    <property type="project" value="UniProtKB-UniRule"/>
</dbReference>
<dbReference type="GO" id="GO:0004756">
    <property type="term" value="F:selenide, water dikinase activity"/>
    <property type="evidence" value="ECO:0007669"/>
    <property type="project" value="UniProtKB-UniRule"/>
</dbReference>
<dbReference type="GO" id="GO:0016260">
    <property type="term" value="P:selenocysteine biosynthetic process"/>
    <property type="evidence" value="ECO:0007669"/>
    <property type="project" value="InterPro"/>
</dbReference>
<dbReference type="CDD" id="cd02195">
    <property type="entry name" value="SelD"/>
    <property type="match status" value="1"/>
</dbReference>
<dbReference type="FunFam" id="3.30.1330.10:FF:000003">
    <property type="entry name" value="Selenide, water dikinase"/>
    <property type="match status" value="1"/>
</dbReference>
<dbReference type="FunFam" id="3.90.650.10:FF:000004">
    <property type="entry name" value="Selenide, water dikinase"/>
    <property type="match status" value="1"/>
</dbReference>
<dbReference type="Gene3D" id="3.90.650.10">
    <property type="entry name" value="PurM-like C-terminal domain"/>
    <property type="match status" value="1"/>
</dbReference>
<dbReference type="Gene3D" id="3.30.1330.10">
    <property type="entry name" value="PurM-like, N-terminal domain"/>
    <property type="match status" value="1"/>
</dbReference>
<dbReference type="HAMAP" id="MF_00625">
    <property type="entry name" value="SelD"/>
    <property type="match status" value="1"/>
</dbReference>
<dbReference type="InterPro" id="IPR010918">
    <property type="entry name" value="PurM-like_C_dom"/>
</dbReference>
<dbReference type="InterPro" id="IPR036676">
    <property type="entry name" value="PurM-like_C_sf"/>
</dbReference>
<dbReference type="InterPro" id="IPR016188">
    <property type="entry name" value="PurM-like_N"/>
</dbReference>
<dbReference type="InterPro" id="IPR036921">
    <property type="entry name" value="PurM-like_N_sf"/>
</dbReference>
<dbReference type="InterPro" id="IPR023061">
    <property type="entry name" value="SelD_I"/>
</dbReference>
<dbReference type="InterPro" id="IPR004536">
    <property type="entry name" value="SPS/SelD"/>
</dbReference>
<dbReference type="NCBIfam" id="NF002098">
    <property type="entry name" value="PRK00943.1"/>
    <property type="match status" value="1"/>
</dbReference>
<dbReference type="NCBIfam" id="TIGR00476">
    <property type="entry name" value="selD"/>
    <property type="match status" value="1"/>
</dbReference>
<dbReference type="PANTHER" id="PTHR10256:SF0">
    <property type="entry name" value="INACTIVE SELENIDE, WATER DIKINASE-LIKE PROTEIN-RELATED"/>
    <property type="match status" value="1"/>
</dbReference>
<dbReference type="PANTHER" id="PTHR10256">
    <property type="entry name" value="SELENIDE, WATER DIKINASE"/>
    <property type="match status" value="1"/>
</dbReference>
<dbReference type="Pfam" id="PF00586">
    <property type="entry name" value="AIRS"/>
    <property type="match status" value="1"/>
</dbReference>
<dbReference type="Pfam" id="PF02769">
    <property type="entry name" value="AIRS_C"/>
    <property type="match status" value="1"/>
</dbReference>
<dbReference type="PIRSF" id="PIRSF036407">
    <property type="entry name" value="Selenphspht_syn"/>
    <property type="match status" value="1"/>
</dbReference>
<dbReference type="SUPFAM" id="SSF56042">
    <property type="entry name" value="PurM C-terminal domain-like"/>
    <property type="match status" value="1"/>
</dbReference>
<dbReference type="SUPFAM" id="SSF55326">
    <property type="entry name" value="PurM N-terminal domain-like"/>
    <property type="match status" value="1"/>
</dbReference>
<sequence>MTSIRLTQYSHGAGCGCKISPSVLDVMLKSSLALPVNDALLVGNSTKDDAAVFDIGNDQGVISTTDFFMPIVDDPTDFGKIAACNAISDIYAMGGKPIMAIAILGWPVNLLAPEIAQQVLDGARAICAEAGIPLAGGHSIDAPEPIFGLAVTGLINNAHIKRNNTAEVGDLLYLTKPLGIGIMTTAEKQGKLLPEHAQLAPQAMKTLNVIGQKFAELEVVTAMTDVTGFALLGHLLEMCQGSGVAAVIDFEQVPRLDFVNDYIDQGCVPGGCERNFISYGEHVGPLSPKQKILLCDPQTSGGLLVAVKPQGKEAFEALCQENGLNLQPIGELVAATSPTVSLLS</sequence>